<protein>
    <recommendedName>
        <fullName>Histidine biosynthesis trifunctional protein</fullName>
    </recommendedName>
    <domain>
        <recommendedName>
            <fullName>Phosphoribosyl-AMP cyclohydrolase</fullName>
            <ecNumber>3.5.4.19</ecNumber>
        </recommendedName>
    </domain>
    <domain>
        <recommendedName>
            <fullName>Phosphoribosyl-ATP pyrophosphohydrolase</fullName>
            <ecNumber>3.6.1.31</ecNumber>
        </recommendedName>
    </domain>
    <domain>
        <recommendedName>
            <fullName>Histidinol dehydrogenase</fullName>
            <shortName>HDH</shortName>
            <ecNumber>1.1.1.23</ecNumber>
        </recommendedName>
    </domain>
</protein>
<dbReference type="EC" id="3.5.4.19"/>
<dbReference type="EC" id="3.6.1.31"/>
<dbReference type="EC" id="1.1.1.23"/>
<dbReference type="EMBL" id="M27531">
    <property type="protein sequence ID" value="AAA33588.1"/>
    <property type="status" value="ALT_FRAME"/>
    <property type="molecule type" value="Genomic_DNA"/>
</dbReference>
<dbReference type="EMBL" id="AF045455">
    <property type="protein sequence ID" value="AAC02221.1"/>
    <property type="molecule type" value="Genomic_DNA"/>
</dbReference>
<dbReference type="EMBL" id="AF045456">
    <property type="protein sequence ID" value="AAC02222.1"/>
    <property type="molecule type" value="Genomic_DNA"/>
</dbReference>
<dbReference type="EMBL" id="BX842637">
    <property type="protein sequence ID" value="CAE76555.1"/>
    <property type="molecule type" value="Genomic_DNA"/>
</dbReference>
<dbReference type="EMBL" id="CM002236">
    <property type="protein sequence ID" value="EAA34952.1"/>
    <property type="molecule type" value="Genomic_DNA"/>
</dbReference>
<dbReference type="PIR" id="A23978">
    <property type="entry name" value="SHNC"/>
</dbReference>
<dbReference type="RefSeq" id="XP_964188.1">
    <property type="nucleotide sequence ID" value="XM_959095.3"/>
</dbReference>
<dbReference type="SMR" id="P07685"/>
<dbReference type="FunCoup" id="P07685">
    <property type="interactions" value="333"/>
</dbReference>
<dbReference type="STRING" id="367110.P07685"/>
<dbReference type="PaxDb" id="5141-EFNCRP00000002825"/>
<dbReference type="EnsemblFungi" id="EAA34952">
    <property type="protein sequence ID" value="EAA34952"/>
    <property type="gene ID" value="NCU03139"/>
</dbReference>
<dbReference type="GeneID" id="3880337"/>
<dbReference type="KEGG" id="ncr:NCU03139"/>
<dbReference type="VEuPathDB" id="FungiDB:NCU03139"/>
<dbReference type="HOGENOM" id="CLU_006732_0_0_1"/>
<dbReference type="InParanoid" id="P07685"/>
<dbReference type="OMA" id="SVFIGAW"/>
<dbReference type="OrthoDB" id="1703565at2759"/>
<dbReference type="SABIO-RK" id="P07685"/>
<dbReference type="UniPathway" id="UPA00031">
    <property type="reaction ID" value="UER00007"/>
</dbReference>
<dbReference type="UniPathway" id="UPA00031">
    <property type="reaction ID" value="UER00008"/>
</dbReference>
<dbReference type="UniPathway" id="UPA00031">
    <property type="reaction ID" value="UER00014"/>
</dbReference>
<dbReference type="Proteomes" id="UP000001805">
    <property type="component" value="Chromosome 1, Linkage Group I"/>
</dbReference>
<dbReference type="GO" id="GO:0005737">
    <property type="term" value="C:cytoplasm"/>
    <property type="evidence" value="ECO:0000318"/>
    <property type="project" value="GO_Central"/>
</dbReference>
<dbReference type="GO" id="GO:0005524">
    <property type="term" value="F:ATP binding"/>
    <property type="evidence" value="ECO:0007669"/>
    <property type="project" value="UniProtKB-KW"/>
</dbReference>
<dbReference type="GO" id="GO:0004399">
    <property type="term" value="F:histidinol dehydrogenase activity"/>
    <property type="evidence" value="ECO:0000318"/>
    <property type="project" value="GO_Central"/>
</dbReference>
<dbReference type="GO" id="GO:0046872">
    <property type="term" value="F:metal ion binding"/>
    <property type="evidence" value="ECO:0007669"/>
    <property type="project" value="UniProtKB-KW"/>
</dbReference>
<dbReference type="GO" id="GO:0051287">
    <property type="term" value="F:NAD binding"/>
    <property type="evidence" value="ECO:0007669"/>
    <property type="project" value="InterPro"/>
</dbReference>
<dbReference type="GO" id="GO:0004635">
    <property type="term" value="F:phosphoribosyl-AMP cyclohydrolase activity"/>
    <property type="evidence" value="ECO:0007669"/>
    <property type="project" value="UniProtKB-EC"/>
</dbReference>
<dbReference type="GO" id="GO:0004636">
    <property type="term" value="F:phosphoribosyl-ATP diphosphatase activity"/>
    <property type="evidence" value="ECO:0007669"/>
    <property type="project" value="UniProtKB-EC"/>
</dbReference>
<dbReference type="GO" id="GO:0000105">
    <property type="term" value="P:L-histidine biosynthetic process"/>
    <property type="evidence" value="ECO:0000318"/>
    <property type="project" value="GO_Central"/>
</dbReference>
<dbReference type="CDD" id="cd06572">
    <property type="entry name" value="Histidinol_dh"/>
    <property type="match status" value="1"/>
</dbReference>
<dbReference type="CDD" id="cd11546">
    <property type="entry name" value="NTP-PPase_His4"/>
    <property type="match status" value="1"/>
</dbReference>
<dbReference type="FunFam" id="1.10.287.1080:FF:000002">
    <property type="entry name" value="Histidine biosynthesis bifunctional protein HisIE"/>
    <property type="match status" value="1"/>
</dbReference>
<dbReference type="FunFam" id="1.20.5.1300:FF:000001">
    <property type="entry name" value="Histidine biosynthesis trifunctional protein"/>
    <property type="match status" value="1"/>
</dbReference>
<dbReference type="FunFam" id="3.10.20.810:FF:000002">
    <property type="entry name" value="Histidine biosynthesis trifunctional protein"/>
    <property type="match status" value="1"/>
</dbReference>
<dbReference type="FunFam" id="3.40.50.1980:FF:000050">
    <property type="entry name" value="Histidine biosynthesis trifunctional protein"/>
    <property type="match status" value="1"/>
</dbReference>
<dbReference type="FunFam" id="3.40.50.1980:FF:000001">
    <property type="entry name" value="Histidinol dehydrogenase"/>
    <property type="match status" value="1"/>
</dbReference>
<dbReference type="Gene3D" id="1.20.5.1300">
    <property type="match status" value="1"/>
</dbReference>
<dbReference type="Gene3D" id="1.10.287.1080">
    <property type="entry name" value="MazG-like"/>
    <property type="match status" value="1"/>
</dbReference>
<dbReference type="Gene3D" id="3.40.50.1980">
    <property type="entry name" value="Nitrogenase molybdenum iron protein domain"/>
    <property type="match status" value="2"/>
</dbReference>
<dbReference type="Gene3D" id="3.10.20.810">
    <property type="entry name" value="Phosphoribosyl-AMP cyclohydrolase"/>
    <property type="match status" value="1"/>
</dbReference>
<dbReference type="HAMAP" id="MF_01024">
    <property type="entry name" value="HisD"/>
    <property type="match status" value="1"/>
</dbReference>
<dbReference type="InterPro" id="IPR016161">
    <property type="entry name" value="Ald_DH/histidinol_DH"/>
</dbReference>
<dbReference type="InterPro" id="IPR008179">
    <property type="entry name" value="HisE"/>
</dbReference>
<dbReference type="InterPro" id="IPR016298">
    <property type="entry name" value="Histidine_synth_trifunct"/>
</dbReference>
<dbReference type="InterPro" id="IPR001692">
    <property type="entry name" value="Histidinol_DH_CS"/>
</dbReference>
<dbReference type="InterPro" id="IPR012131">
    <property type="entry name" value="Hstdl_DH"/>
</dbReference>
<dbReference type="InterPro" id="IPR021130">
    <property type="entry name" value="PRib-ATP_PPHydrolase-like"/>
</dbReference>
<dbReference type="InterPro" id="IPR002496">
    <property type="entry name" value="PRib_AMP_CycHydrolase_dom"/>
</dbReference>
<dbReference type="InterPro" id="IPR038019">
    <property type="entry name" value="PRib_AMP_CycHydrolase_sf"/>
</dbReference>
<dbReference type="NCBIfam" id="TIGR00069">
    <property type="entry name" value="hisD"/>
    <property type="match status" value="1"/>
</dbReference>
<dbReference type="NCBIfam" id="TIGR03188">
    <property type="entry name" value="histidine_hisI"/>
    <property type="match status" value="1"/>
</dbReference>
<dbReference type="PANTHER" id="PTHR21256:SF2">
    <property type="entry name" value="HISTIDINE BIOSYNTHESIS TRIFUNCTIONAL PROTEIN"/>
    <property type="match status" value="1"/>
</dbReference>
<dbReference type="PANTHER" id="PTHR21256">
    <property type="entry name" value="HISTIDINOL DEHYDROGENASE HDH"/>
    <property type="match status" value="1"/>
</dbReference>
<dbReference type="Pfam" id="PF00815">
    <property type="entry name" value="Histidinol_dh"/>
    <property type="match status" value="1"/>
</dbReference>
<dbReference type="Pfam" id="PF01502">
    <property type="entry name" value="PRA-CH"/>
    <property type="match status" value="1"/>
</dbReference>
<dbReference type="Pfam" id="PF01503">
    <property type="entry name" value="PRA-PH"/>
    <property type="match status" value="1"/>
</dbReference>
<dbReference type="PIRSF" id="PIRSF001257">
    <property type="entry name" value="His_trifunctional"/>
    <property type="match status" value="1"/>
</dbReference>
<dbReference type="PRINTS" id="PR00083">
    <property type="entry name" value="HOLDHDRGNASE"/>
</dbReference>
<dbReference type="SUPFAM" id="SSF53720">
    <property type="entry name" value="ALDH-like"/>
    <property type="match status" value="1"/>
</dbReference>
<dbReference type="SUPFAM" id="SSF101386">
    <property type="entry name" value="all-alpha NTP pyrophosphatases"/>
    <property type="match status" value="1"/>
</dbReference>
<dbReference type="SUPFAM" id="SSF141734">
    <property type="entry name" value="HisI-like"/>
    <property type="match status" value="1"/>
</dbReference>
<dbReference type="PROSITE" id="PS00611">
    <property type="entry name" value="HISOL_DEHYDROGENASE"/>
    <property type="match status" value="1"/>
</dbReference>
<comment type="catalytic activity">
    <reaction>
        <text>1-(5-phospho-beta-D-ribosyl)-5'-AMP + H2O = 1-(5-phospho-beta-D-ribosyl)-5-[(5-phospho-beta-D-ribosylamino)methylideneamino]imidazole-4-carboxamide</text>
        <dbReference type="Rhea" id="RHEA:20049"/>
        <dbReference type="ChEBI" id="CHEBI:15377"/>
        <dbReference type="ChEBI" id="CHEBI:58435"/>
        <dbReference type="ChEBI" id="CHEBI:59457"/>
        <dbReference type="EC" id="3.5.4.19"/>
    </reaction>
</comment>
<comment type="catalytic activity">
    <reaction>
        <text>1-(5-phospho-beta-D-ribosyl)-ATP + H2O = 1-(5-phospho-beta-D-ribosyl)-5'-AMP + diphosphate + H(+)</text>
        <dbReference type="Rhea" id="RHEA:22828"/>
        <dbReference type="ChEBI" id="CHEBI:15377"/>
        <dbReference type="ChEBI" id="CHEBI:15378"/>
        <dbReference type="ChEBI" id="CHEBI:33019"/>
        <dbReference type="ChEBI" id="CHEBI:59457"/>
        <dbReference type="ChEBI" id="CHEBI:73183"/>
        <dbReference type="EC" id="3.6.1.31"/>
    </reaction>
</comment>
<comment type="catalytic activity">
    <reaction>
        <text>L-histidinol + 2 NAD(+) + H2O = L-histidine + 2 NADH + 3 H(+)</text>
        <dbReference type="Rhea" id="RHEA:20641"/>
        <dbReference type="ChEBI" id="CHEBI:15377"/>
        <dbReference type="ChEBI" id="CHEBI:15378"/>
        <dbReference type="ChEBI" id="CHEBI:57540"/>
        <dbReference type="ChEBI" id="CHEBI:57595"/>
        <dbReference type="ChEBI" id="CHEBI:57699"/>
        <dbReference type="ChEBI" id="CHEBI:57945"/>
        <dbReference type="EC" id="1.1.1.23"/>
    </reaction>
</comment>
<comment type="cofactor">
    <cofactor evidence="1">
        <name>Zn(2+)</name>
        <dbReference type="ChEBI" id="CHEBI:29105"/>
    </cofactor>
    <text evidence="1">Binds 1 zinc ion.</text>
</comment>
<comment type="pathway">
    <text>Amino-acid biosynthesis; L-histidine biosynthesis; L-histidine from 5-phospho-alpha-D-ribose 1-diphosphate: step 2/9.</text>
</comment>
<comment type="pathway">
    <text>Amino-acid biosynthesis; L-histidine biosynthesis; L-histidine from 5-phospho-alpha-D-ribose 1-diphosphate: step 3/9.</text>
</comment>
<comment type="pathway">
    <text>Amino-acid biosynthesis; L-histidine biosynthesis; L-histidine from 5-phospho-alpha-D-ribose 1-diphosphate: step 9/9.</text>
</comment>
<comment type="similarity">
    <text evidence="3">In the C-terminal section; belongs to the histidinol dehydrogenase family.</text>
</comment>
<comment type="sequence caution" evidence="3">
    <conflict type="frameshift">
        <sequence resource="EMBL-CDS" id="AAA33588"/>
    </conflict>
</comment>
<gene>
    <name type="primary">his-3</name>
    <name type="ORF">5C2.120</name>
    <name type="ORF">NCU03139</name>
</gene>
<reference key="1">
    <citation type="journal article" date="1985" name="Gene">
        <title>Cloning and characterization of the multifunctional his-3 gene of Neurospora crassa.</title>
        <authorList>
            <person name="Legerton T.L."/>
            <person name="Yanofsky C."/>
        </authorList>
    </citation>
    <scope>NUCLEOTIDE SEQUENCE [GENOMIC DNA]</scope>
    <source>
        <strain>74-OR23-1VA / FGSC 2489</strain>
    </source>
</reference>
<reference key="2">
    <citation type="journal article" date="1998" name="Fungal Genet. Newsl.">
        <title>DNA sequence of histidine-3 from two Neurospora wild-types.</title>
        <authorList>
            <person name="Yeadon P.J."/>
            <person name="Petersen A."/>
            <person name="Catcheside D.E.A."/>
        </authorList>
    </citation>
    <scope>NUCLEOTIDE SEQUENCE [GENOMIC DNA]</scope>
    <scope>VARIANTS LYS-44; VAL-50; PRO-410; ASN-708 AND MET-726</scope>
    <source>
        <strain>74-OR23-1VA / FGSC 2489</strain>
        <strain>FGSC 541</strain>
    </source>
</reference>
<reference key="3">
    <citation type="journal article" date="2003" name="Nucleic Acids Res.">
        <title>What's in the genome of a filamentous fungus? Analysis of the Neurospora genome sequence.</title>
        <authorList>
            <person name="Mannhaupt G."/>
            <person name="Montrone C."/>
            <person name="Haase D."/>
            <person name="Mewes H.-W."/>
            <person name="Aign V."/>
            <person name="Hoheisel J.D."/>
            <person name="Fartmann B."/>
            <person name="Nyakatura G."/>
            <person name="Kempken F."/>
            <person name="Maier J."/>
            <person name="Schulte U."/>
        </authorList>
    </citation>
    <scope>NUCLEOTIDE SEQUENCE [LARGE SCALE GENOMIC DNA]</scope>
    <source>
        <strain>ATCC 24698 / 74-OR23-1A / CBS 708.71 / DSM 1257 / FGSC 987</strain>
    </source>
</reference>
<reference key="4">
    <citation type="journal article" date="2003" name="Nature">
        <title>The genome sequence of the filamentous fungus Neurospora crassa.</title>
        <authorList>
            <person name="Galagan J.E."/>
            <person name="Calvo S.E."/>
            <person name="Borkovich K.A."/>
            <person name="Selker E.U."/>
            <person name="Read N.D."/>
            <person name="Jaffe D.B."/>
            <person name="FitzHugh W."/>
            <person name="Ma L.-J."/>
            <person name="Smirnov S."/>
            <person name="Purcell S."/>
            <person name="Rehman B."/>
            <person name="Elkins T."/>
            <person name="Engels R."/>
            <person name="Wang S."/>
            <person name="Nielsen C.B."/>
            <person name="Butler J."/>
            <person name="Endrizzi M."/>
            <person name="Qui D."/>
            <person name="Ianakiev P."/>
            <person name="Bell-Pedersen D."/>
            <person name="Nelson M.A."/>
            <person name="Werner-Washburne M."/>
            <person name="Selitrennikoff C.P."/>
            <person name="Kinsey J.A."/>
            <person name="Braun E.L."/>
            <person name="Zelter A."/>
            <person name="Schulte U."/>
            <person name="Kothe G.O."/>
            <person name="Jedd G."/>
            <person name="Mewes H.-W."/>
            <person name="Staben C."/>
            <person name="Marcotte E."/>
            <person name="Greenberg D."/>
            <person name="Roy A."/>
            <person name="Foley K."/>
            <person name="Naylor J."/>
            <person name="Stange-Thomann N."/>
            <person name="Barrett R."/>
            <person name="Gnerre S."/>
            <person name="Kamal M."/>
            <person name="Kamvysselis M."/>
            <person name="Mauceli E.W."/>
            <person name="Bielke C."/>
            <person name="Rudd S."/>
            <person name="Frishman D."/>
            <person name="Krystofova S."/>
            <person name="Rasmussen C."/>
            <person name="Metzenberg R.L."/>
            <person name="Perkins D.D."/>
            <person name="Kroken S."/>
            <person name="Cogoni C."/>
            <person name="Macino G."/>
            <person name="Catcheside D.E.A."/>
            <person name="Li W."/>
            <person name="Pratt R.J."/>
            <person name="Osmani S.A."/>
            <person name="DeSouza C.P.C."/>
            <person name="Glass N.L."/>
            <person name="Orbach M.J."/>
            <person name="Berglund J.A."/>
            <person name="Voelker R."/>
            <person name="Yarden O."/>
            <person name="Plamann M."/>
            <person name="Seiler S."/>
            <person name="Dunlap J.C."/>
            <person name="Radford A."/>
            <person name="Aramayo R."/>
            <person name="Natvig D.O."/>
            <person name="Alex L.A."/>
            <person name="Mannhaupt G."/>
            <person name="Ebbole D.J."/>
            <person name="Freitag M."/>
            <person name="Paulsen I."/>
            <person name="Sachs M.S."/>
            <person name="Lander E.S."/>
            <person name="Nusbaum C."/>
            <person name="Birren B.W."/>
        </authorList>
    </citation>
    <scope>NUCLEOTIDE SEQUENCE [LARGE SCALE GENOMIC DNA]</scope>
    <source>
        <strain>ATCC 24698 / 74-OR23-1A / CBS 708.71 / DSM 1257 / FGSC 987</strain>
    </source>
</reference>
<organism>
    <name type="scientific">Neurospora crassa (strain ATCC 24698 / 74-OR23-1A / CBS 708.71 / DSM 1257 / FGSC 987)</name>
    <dbReference type="NCBI Taxonomy" id="367110"/>
    <lineage>
        <taxon>Eukaryota</taxon>
        <taxon>Fungi</taxon>
        <taxon>Dikarya</taxon>
        <taxon>Ascomycota</taxon>
        <taxon>Pezizomycotina</taxon>
        <taxon>Sordariomycetes</taxon>
        <taxon>Sordariomycetidae</taxon>
        <taxon>Sordariales</taxon>
        <taxon>Sordariaceae</taxon>
        <taxon>Neurospora</taxon>
    </lineage>
</organism>
<accession>P07685</accession>
<accession>O42788</accession>
<accession>O42789</accession>
<accession>Q7RVK0</accession>
<sequence>METTLPLPFLVGVSVPPGLNDIKEGLSREEVSCLGCVFFEVKPQTLEKILRFLKRHNVEFEPYFDVTALESIDDIITLLDAGARKVFVKTEQLADLSAYGSRVAPIVTGSSAALLSSATESGLLLSGFDQTASEAAQFLEEARDKKITPFFIKPVPGADLEQFIQVAAKANAIPILPSTGLTTKKDEAGKLAISTILSSVWKSDRPDGLLPTVVVDEHDTALGLVYSSAESVNEALRTQTGVYQSRKRGLWYKGATSGDTQELVRISLDCDNDALKFVVKQKGRFCHLDQSGCFGQLKGLPKLEQTLISRKQSAPEGSYTARLFSDEKLVRAKIMEEAEELCTAQTPQEIAFEAADLFYFALTRAVAAGVTLADIERSLDAKSWKVKRRTGDAKGKWAEKEGIKPAASALAATSAPVTKEAAQETTPEKITMRRFDASKVSTEELDAALKRPAQKSSDAIYKIIVPIIEDVRKNGDKAVLSYTHKFEKATSLTSPVLKAPFPKELMQLPEETIAAIDVSFENIRKFHAAQKEEKPLQVETMPGVVCSRFSRPIEAVGCYIPGGTAVLPSTALMLGVPAMVAGCNKIVFASPPRADGTITPEIVYVAHKVGAESIVLAGGAQAVAAMAYGTESITKVDKILGPGNQFVTAAKMFVSNDTNAAVGIDMPAGPSEVLVIADKDANPAFVASDLLSQAEHGVDSQVILIAIDLDEEHLQAIEDEVHRQATELPRVQIVRGSIAHSITVQVKTVEEAMELSNKYAPEHLILQIKEAEKAVDLVMNAGSVFIGAWTPESVGDYSAGVNHSLPTYGFAKQYSGVNLASFVKHITSSNLTAEGLKNVGQAVMQLAKVEELEAHRRAVSIRLEHMSKSN</sequence>
<keyword id="KW-0028">Amino-acid biosynthesis</keyword>
<keyword id="KW-0067">ATP-binding</keyword>
<keyword id="KW-0368">Histidine biosynthesis</keyword>
<keyword id="KW-0378">Hydrolase</keyword>
<keyword id="KW-0479">Metal-binding</keyword>
<keyword id="KW-0511">Multifunctional enzyme</keyword>
<keyword id="KW-0520">NAD</keyword>
<keyword id="KW-0547">Nucleotide-binding</keyword>
<keyword id="KW-0560">Oxidoreductase</keyword>
<keyword id="KW-1185">Reference proteome</keyword>
<keyword id="KW-0862">Zinc</keyword>
<feature type="chain" id="PRO_0000135911" description="Histidine biosynthesis trifunctional protein">
    <location>
        <begin position="1"/>
        <end position="870"/>
    </location>
</feature>
<feature type="region of interest" description="Phosphoribosyl-AMP cyclohydrolase">
    <location>
        <begin position="1"/>
        <end position="285"/>
    </location>
</feature>
<feature type="region of interest" description="Phosphoribosyl-ATP pyrophosphohydrolase">
    <location>
        <begin position="286"/>
        <end position="367"/>
    </location>
</feature>
<feature type="region of interest" description="Histidinol dehydrogenase">
    <location>
        <begin position="368"/>
        <end position="870"/>
    </location>
</feature>
<feature type="active site" evidence="1">
    <location>
        <position position="762"/>
    </location>
</feature>
<feature type="active site" evidence="1">
    <location>
        <position position="763"/>
    </location>
</feature>
<feature type="binding site" evidence="1">
    <location>
        <position position="693"/>
    </location>
    <ligand>
        <name>Zn(2+)</name>
        <dbReference type="ChEBI" id="CHEBI:29105"/>
    </ligand>
</feature>
<feature type="binding site" evidence="1">
    <location>
        <position position="696"/>
    </location>
    <ligand>
        <name>Zn(2+)</name>
        <dbReference type="ChEBI" id="CHEBI:29105"/>
    </ligand>
</feature>
<feature type="binding site" evidence="1">
    <location>
        <position position="796"/>
    </location>
    <ligand>
        <name>Zn(2+)</name>
        <dbReference type="ChEBI" id="CHEBI:29105"/>
    </ligand>
</feature>
<feature type="binding site" evidence="1">
    <location>
        <position position="855"/>
    </location>
    <ligand>
        <name>Zn(2+)</name>
        <dbReference type="ChEBI" id="CHEBI:29105"/>
    </ligand>
</feature>
<feature type="sequence variant" description="In strain: FGSC 541." evidence="2">
    <original>Q</original>
    <variation>K</variation>
    <location>
        <position position="44"/>
    </location>
</feature>
<feature type="sequence variant" description="In strain: FGSC 541." evidence="2">
    <original>L</original>
    <variation>V</variation>
    <location>
        <position position="50"/>
    </location>
</feature>
<feature type="sequence variant" description="In strain: FGSC 541." evidence="2">
    <original>L</original>
    <variation>P</variation>
    <location>
        <position position="410"/>
    </location>
</feature>
<feature type="sequence variant" description="In strain: FGSC 541." evidence="2">
    <original>D</original>
    <variation>N</variation>
    <location>
        <position position="708"/>
    </location>
</feature>
<feature type="sequence variant" description="In strain: FGSC 541." evidence="2">
    <original>T</original>
    <variation>M</variation>
    <location>
        <position position="726"/>
    </location>
</feature>
<feature type="sequence conflict" description="In Ref. 2; AAC02221/AAC02222." evidence="3" ref="2">
    <original>Y</original>
    <variation>H</variation>
    <location>
        <position position="604"/>
    </location>
</feature>
<feature type="sequence conflict" description="In Ref. 2; AAC02221/AAC02222." evidence="3" ref="2">
    <original>A</original>
    <variation>G</variation>
    <location>
        <position position="811"/>
    </location>
</feature>
<feature type="sequence conflict" description="In Ref. 2; AAC02221." evidence="3" ref="2">
    <original>L</original>
    <variation>F</variation>
    <location>
        <position position="819"/>
    </location>
</feature>
<proteinExistence type="inferred from homology"/>
<name>HIS2_NEUCR</name>
<evidence type="ECO:0000250" key="1"/>
<evidence type="ECO:0000269" key="2">
    <source ref="2"/>
</evidence>
<evidence type="ECO:0000305" key="3"/>